<organism>
    <name type="scientific">Stylonychia mytilus</name>
    <name type="common">Ciliate</name>
    <dbReference type="NCBI Taxonomy" id="5950"/>
    <lineage>
        <taxon>Eukaryota</taxon>
        <taxon>Sar</taxon>
        <taxon>Alveolata</taxon>
        <taxon>Ciliophora</taxon>
        <taxon>Intramacronucleata</taxon>
        <taxon>Spirotrichea</taxon>
        <taxon>Stichotrichia</taxon>
        <taxon>Sporadotrichida</taxon>
        <taxon>Oxytrichidae</taxon>
        <taxon>Stylonychinae</taxon>
        <taxon>Stylonychia</taxon>
    </lineage>
</organism>
<proteinExistence type="inferred from homology"/>
<comment type="function">
    <text>Directs the termination of nascent peptide synthesis (translation) in response to the termination codon UGA. In Stylonchia UAA and UAG codes for glutamine.</text>
</comment>
<comment type="subunit">
    <text>Heterodimer of two subunits, one of which binds GTP.</text>
</comment>
<comment type="subcellular location">
    <subcellularLocation>
        <location>Cytoplasm</location>
    </subcellularLocation>
</comment>
<comment type="similarity">
    <text evidence="1">Belongs to the eukaryotic release factor 1 family.</text>
</comment>
<dbReference type="EMBL" id="AF317833">
    <property type="protein sequence ID" value="AAK12091.1"/>
    <property type="molecule type" value="Genomic_DNA"/>
</dbReference>
<dbReference type="GO" id="GO:0005737">
    <property type="term" value="C:cytoplasm"/>
    <property type="evidence" value="ECO:0007669"/>
    <property type="project" value="UniProtKB-SubCell"/>
</dbReference>
<dbReference type="GO" id="GO:0003747">
    <property type="term" value="F:translation release factor activity"/>
    <property type="evidence" value="ECO:0007669"/>
    <property type="project" value="InterPro"/>
</dbReference>
<dbReference type="FunFam" id="3.30.1330.30:FF:000006">
    <property type="entry name" value="Peptide chain release factor subunit 1"/>
    <property type="match status" value="1"/>
</dbReference>
<dbReference type="FunFam" id="3.30.420.60:FF:000003">
    <property type="entry name" value="Peptide chain release factor subunit 1"/>
    <property type="match status" value="1"/>
</dbReference>
<dbReference type="Gene3D" id="3.30.1330.30">
    <property type="match status" value="1"/>
</dbReference>
<dbReference type="Gene3D" id="3.30.960.10">
    <property type="entry name" value="eRF1 domain 1"/>
    <property type="match status" value="1"/>
</dbReference>
<dbReference type="Gene3D" id="3.30.420.60">
    <property type="entry name" value="eRF1 domain 2"/>
    <property type="match status" value="1"/>
</dbReference>
<dbReference type="InterPro" id="IPR042226">
    <property type="entry name" value="eFR1_2_sf"/>
</dbReference>
<dbReference type="InterPro" id="IPR005140">
    <property type="entry name" value="eRF1_1_Pelota"/>
</dbReference>
<dbReference type="InterPro" id="IPR024049">
    <property type="entry name" value="eRF1_1_sf"/>
</dbReference>
<dbReference type="InterPro" id="IPR005141">
    <property type="entry name" value="eRF1_2"/>
</dbReference>
<dbReference type="InterPro" id="IPR005142">
    <property type="entry name" value="eRF1_3"/>
</dbReference>
<dbReference type="InterPro" id="IPR004403">
    <property type="entry name" value="Peptide_chain-rel_eRF1/aRF1"/>
</dbReference>
<dbReference type="InterPro" id="IPR029064">
    <property type="entry name" value="Ribosomal_eL30-like_sf"/>
</dbReference>
<dbReference type="NCBIfam" id="TIGR03676">
    <property type="entry name" value="aRF1_eRF1"/>
    <property type="match status" value="1"/>
</dbReference>
<dbReference type="PANTHER" id="PTHR10113">
    <property type="entry name" value="PEPTIDE CHAIN RELEASE FACTOR SUBUNIT 1"/>
    <property type="match status" value="1"/>
</dbReference>
<dbReference type="Pfam" id="PF03463">
    <property type="entry name" value="eRF1_1"/>
    <property type="match status" value="1"/>
</dbReference>
<dbReference type="Pfam" id="PF03464">
    <property type="entry name" value="eRF1_2"/>
    <property type="match status" value="1"/>
</dbReference>
<dbReference type="Pfam" id="PF03465">
    <property type="entry name" value="eRF1_3"/>
    <property type="match status" value="1"/>
</dbReference>
<dbReference type="SMART" id="SM01194">
    <property type="entry name" value="eRF1_1"/>
    <property type="match status" value="1"/>
</dbReference>
<dbReference type="SUPFAM" id="SSF55315">
    <property type="entry name" value="L30e-like"/>
    <property type="match status" value="1"/>
</dbReference>
<dbReference type="SUPFAM" id="SSF55481">
    <property type="entry name" value="N-terminal domain of eukaryotic peptide chain release factor subunit 1, ERF1"/>
    <property type="match status" value="1"/>
</dbReference>
<dbReference type="SUPFAM" id="SSF53137">
    <property type="entry name" value="Translational machinery components"/>
    <property type="match status" value="1"/>
</dbReference>
<protein>
    <recommendedName>
        <fullName>Eukaryotic peptide chain release factor subunit 1</fullName>
        <shortName>Eukaryotic release factor 1</shortName>
        <shortName>eRF1</shortName>
    </recommendedName>
</protein>
<feature type="chain" id="PRO_0000143159" description="Eukaryotic peptide chain release factor subunit 1">
    <location>
        <begin position="1"/>
        <end position="445"/>
    </location>
</feature>
<name>ERF1_STYMT</name>
<gene>
    <name type="primary">ERF1</name>
</gene>
<sequence length="445" mass="49671">MVESIAAGQVGDNKHIEMWKIKRLINKLENCKGNGTSMVSLIIPPKEDINKSGKLLVGELSAAQNIKSRITRQSVITAITSTKEKLKLYRQTPTNGLCIYCGVILMEDGKTEKKINFDFEPFRPINQFMYFCGGKFQTEPLTTLLADDDKFGFIIVDGNGALYATLQGNSREILQKITVELPKKHRKGGQSSVRFARLREEKRHNYLRKVAELAGSNFITNDKPNVTGLVLAGNAGFKNELSETDMLDKRLLPIIVSIVDVSYGGENGLNEAITLSADALTNVKFVAEKKLVSKFFEEISLDTGMIVFGVQDTMKALELGAVETILLFEELEITRYVIKNPVKGDTRTLFLNPTQQKDSKYFKDQASGLDMDVISEDQLAEWLCHNYQNYXAQVEFITDKSQEGYQFVKGFGGIGGFLRYKVDMEEALGDVGDGGDDFDPDTDFI</sequence>
<accession>Q9BMM1</accession>
<evidence type="ECO:0000305" key="1"/>
<reference key="1">
    <citation type="journal article" date="2001" name="Curr. Biol.">
        <title>The molecular basis of nuclear genetic code change in ciliates.</title>
        <authorList>
            <person name="Lozupone C.A."/>
            <person name="Knight R.D."/>
            <person name="Landweber L.F."/>
        </authorList>
    </citation>
    <scope>NUCLEOTIDE SEQUENCE [GENOMIC DNA]</scope>
</reference>
<keyword id="KW-0963">Cytoplasm</keyword>
<keyword id="KW-0648">Protein biosynthesis</keyword>